<reference key="1">
    <citation type="journal article" date="2010" name="Environ. Microbiol.">
        <title>The genome of Syntrophomonas wolfei: new insights into syntrophic metabolism and biohydrogen production.</title>
        <authorList>
            <person name="Sieber J.R."/>
            <person name="Sims D.R."/>
            <person name="Han C."/>
            <person name="Kim E."/>
            <person name="Lykidis A."/>
            <person name="Lapidus A.L."/>
            <person name="McDonnald E."/>
            <person name="Rohlin L."/>
            <person name="Culley D.E."/>
            <person name="Gunsalus R."/>
            <person name="McInerney M.J."/>
        </authorList>
    </citation>
    <scope>NUCLEOTIDE SEQUENCE [LARGE SCALE GENOMIC DNA]</scope>
    <source>
        <strain>DSM 2245B / Goettingen</strain>
    </source>
</reference>
<accession>Q0AZ31</accession>
<proteinExistence type="inferred from homology"/>
<feature type="chain" id="PRO_1000011267" description="Phosphopantetheine adenylyltransferase">
    <location>
        <begin position="1"/>
        <end position="161"/>
    </location>
</feature>
<feature type="binding site" evidence="1">
    <location>
        <begin position="9"/>
        <end position="10"/>
    </location>
    <ligand>
        <name>ATP</name>
        <dbReference type="ChEBI" id="CHEBI:30616"/>
    </ligand>
</feature>
<feature type="binding site" evidence="1">
    <location>
        <position position="9"/>
    </location>
    <ligand>
        <name>substrate</name>
    </ligand>
</feature>
<feature type="binding site" evidence="1">
    <location>
        <position position="17"/>
    </location>
    <ligand>
        <name>ATP</name>
        <dbReference type="ChEBI" id="CHEBI:30616"/>
    </ligand>
</feature>
<feature type="binding site" evidence="1">
    <location>
        <position position="41"/>
    </location>
    <ligand>
        <name>substrate</name>
    </ligand>
</feature>
<feature type="binding site" evidence="1">
    <location>
        <position position="73"/>
    </location>
    <ligand>
        <name>substrate</name>
    </ligand>
</feature>
<feature type="binding site" evidence="1">
    <location>
        <position position="87"/>
    </location>
    <ligand>
        <name>substrate</name>
    </ligand>
</feature>
<feature type="binding site" evidence="1">
    <location>
        <begin position="88"/>
        <end position="90"/>
    </location>
    <ligand>
        <name>ATP</name>
        <dbReference type="ChEBI" id="CHEBI:30616"/>
    </ligand>
</feature>
<feature type="binding site" evidence="1">
    <location>
        <position position="98"/>
    </location>
    <ligand>
        <name>ATP</name>
        <dbReference type="ChEBI" id="CHEBI:30616"/>
    </ligand>
</feature>
<feature type="binding site" evidence="1">
    <location>
        <begin position="123"/>
        <end position="129"/>
    </location>
    <ligand>
        <name>ATP</name>
        <dbReference type="ChEBI" id="CHEBI:30616"/>
    </ligand>
</feature>
<feature type="site" description="Transition state stabilizer" evidence="1">
    <location>
        <position position="17"/>
    </location>
</feature>
<gene>
    <name evidence="1" type="primary">coaD</name>
    <name type="ordered locus">Swol_0699</name>
</gene>
<comment type="function">
    <text evidence="1">Reversibly transfers an adenylyl group from ATP to 4'-phosphopantetheine, yielding dephospho-CoA (dPCoA) and pyrophosphate.</text>
</comment>
<comment type="catalytic activity">
    <reaction evidence="1">
        <text>(R)-4'-phosphopantetheine + ATP + H(+) = 3'-dephospho-CoA + diphosphate</text>
        <dbReference type="Rhea" id="RHEA:19801"/>
        <dbReference type="ChEBI" id="CHEBI:15378"/>
        <dbReference type="ChEBI" id="CHEBI:30616"/>
        <dbReference type="ChEBI" id="CHEBI:33019"/>
        <dbReference type="ChEBI" id="CHEBI:57328"/>
        <dbReference type="ChEBI" id="CHEBI:61723"/>
        <dbReference type="EC" id="2.7.7.3"/>
    </reaction>
</comment>
<comment type="cofactor">
    <cofactor evidence="1">
        <name>Mg(2+)</name>
        <dbReference type="ChEBI" id="CHEBI:18420"/>
    </cofactor>
</comment>
<comment type="pathway">
    <text evidence="1">Cofactor biosynthesis; coenzyme A biosynthesis; CoA from (R)-pantothenate: step 4/5.</text>
</comment>
<comment type="subunit">
    <text evidence="1">Homohexamer.</text>
</comment>
<comment type="subcellular location">
    <subcellularLocation>
        <location evidence="1">Cytoplasm</location>
    </subcellularLocation>
</comment>
<comment type="similarity">
    <text evidence="1">Belongs to the bacterial CoaD family.</text>
</comment>
<name>COAD_SYNWW</name>
<organism>
    <name type="scientific">Syntrophomonas wolfei subsp. wolfei (strain DSM 2245B / Goettingen)</name>
    <dbReference type="NCBI Taxonomy" id="335541"/>
    <lineage>
        <taxon>Bacteria</taxon>
        <taxon>Bacillati</taxon>
        <taxon>Bacillota</taxon>
        <taxon>Clostridia</taxon>
        <taxon>Eubacteriales</taxon>
        <taxon>Syntrophomonadaceae</taxon>
        <taxon>Syntrophomonas</taxon>
    </lineage>
</organism>
<keyword id="KW-0067">ATP-binding</keyword>
<keyword id="KW-0173">Coenzyme A biosynthesis</keyword>
<keyword id="KW-0963">Cytoplasm</keyword>
<keyword id="KW-0460">Magnesium</keyword>
<keyword id="KW-0547">Nucleotide-binding</keyword>
<keyword id="KW-0548">Nucleotidyltransferase</keyword>
<keyword id="KW-1185">Reference proteome</keyword>
<keyword id="KW-0808">Transferase</keyword>
<evidence type="ECO:0000255" key="1">
    <source>
        <dbReference type="HAMAP-Rule" id="MF_00151"/>
    </source>
</evidence>
<protein>
    <recommendedName>
        <fullName evidence="1">Phosphopantetheine adenylyltransferase</fullName>
        <ecNumber evidence="1">2.7.7.3</ecNumber>
    </recommendedName>
    <alternativeName>
        <fullName evidence="1">Dephospho-CoA pyrophosphorylase</fullName>
    </alternativeName>
    <alternativeName>
        <fullName evidence="1">Pantetheine-phosphate adenylyltransferase</fullName>
        <shortName evidence="1">PPAT</shortName>
    </alternativeName>
</protein>
<sequence>MKLAVYPGSFDPVTNGHIDILEKSSKIFDEIIVAVIHNVTKKALFSLDERVKLIEESTRHLNNVRVDAFSGLLANYLADKQACAIIRGLRTVTDFEYEMHMAMMNKKLIPNIDTMFFMSDSQYTFISSSAVKEAALLGGDVGSLVPAVVKAGLEEKMLNDG</sequence>
<dbReference type="EC" id="2.7.7.3" evidence="1"/>
<dbReference type="EMBL" id="CP000448">
    <property type="protein sequence ID" value="ABI68023.1"/>
    <property type="molecule type" value="Genomic_DNA"/>
</dbReference>
<dbReference type="RefSeq" id="WP_011640128.1">
    <property type="nucleotide sequence ID" value="NC_008346.1"/>
</dbReference>
<dbReference type="SMR" id="Q0AZ31"/>
<dbReference type="STRING" id="335541.Swol_0699"/>
<dbReference type="KEGG" id="swo:Swol_0699"/>
<dbReference type="eggNOG" id="COG0669">
    <property type="taxonomic scope" value="Bacteria"/>
</dbReference>
<dbReference type="HOGENOM" id="CLU_100149_0_1_9"/>
<dbReference type="UniPathway" id="UPA00241">
    <property type="reaction ID" value="UER00355"/>
</dbReference>
<dbReference type="Proteomes" id="UP000001968">
    <property type="component" value="Chromosome"/>
</dbReference>
<dbReference type="GO" id="GO:0005737">
    <property type="term" value="C:cytoplasm"/>
    <property type="evidence" value="ECO:0007669"/>
    <property type="project" value="UniProtKB-SubCell"/>
</dbReference>
<dbReference type="GO" id="GO:0005524">
    <property type="term" value="F:ATP binding"/>
    <property type="evidence" value="ECO:0007669"/>
    <property type="project" value="UniProtKB-KW"/>
</dbReference>
<dbReference type="GO" id="GO:0004595">
    <property type="term" value="F:pantetheine-phosphate adenylyltransferase activity"/>
    <property type="evidence" value="ECO:0007669"/>
    <property type="project" value="UniProtKB-UniRule"/>
</dbReference>
<dbReference type="GO" id="GO:0015937">
    <property type="term" value="P:coenzyme A biosynthetic process"/>
    <property type="evidence" value="ECO:0007669"/>
    <property type="project" value="UniProtKB-UniRule"/>
</dbReference>
<dbReference type="CDD" id="cd02163">
    <property type="entry name" value="PPAT"/>
    <property type="match status" value="1"/>
</dbReference>
<dbReference type="Gene3D" id="3.40.50.620">
    <property type="entry name" value="HUPs"/>
    <property type="match status" value="1"/>
</dbReference>
<dbReference type="HAMAP" id="MF_00151">
    <property type="entry name" value="PPAT_bact"/>
    <property type="match status" value="1"/>
</dbReference>
<dbReference type="InterPro" id="IPR004821">
    <property type="entry name" value="Cyt_trans-like"/>
</dbReference>
<dbReference type="InterPro" id="IPR001980">
    <property type="entry name" value="PPAT"/>
</dbReference>
<dbReference type="InterPro" id="IPR014729">
    <property type="entry name" value="Rossmann-like_a/b/a_fold"/>
</dbReference>
<dbReference type="NCBIfam" id="TIGR01510">
    <property type="entry name" value="coaD_prev_kdtB"/>
    <property type="match status" value="1"/>
</dbReference>
<dbReference type="NCBIfam" id="TIGR00125">
    <property type="entry name" value="cyt_tran_rel"/>
    <property type="match status" value="1"/>
</dbReference>
<dbReference type="PANTHER" id="PTHR21342">
    <property type="entry name" value="PHOSPHOPANTETHEINE ADENYLYLTRANSFERASE"/>
    <property type="match status" value="1"/>
</dbReference>
<dbReference type="PANTHER" id="PTHR21342:SF1">
    <property type="entry name" value="PHOSPHOPANTETHEINE ADENYLYLTRANSFERASE"/>
    <property type="match status" value="1"/>
</dbReference>
<dbReference type="Pfam" id="PF01467">
    <property type="entry name" value="CTP_transf_like"/>
    <property type="match status" value="1"/>
</dbReference>
<dbReference type="PRINTS" id="PR01020">
    <property type="entry name" value="LPSBIOSNTHSS"/>
</dbReference>
<dbReference type="SUPFAM" id="SSF52374">
    <property type="entry name" value="Nucleotidylyl transferase"/>
    <property type="match status" value="1"/>
</dbReference>